<organism>
    <name type="scientific">Rickettsia rickettsii (strain Sheila Smith)</name>
    <dbReference type="NCBI Taxonomy" id="392021"/>
    <lineage>
        <taxon>Bacteria</taxon>
        <taxon>Pseudomonadati</taxon>
        <taxon>Pseudomonadota</taxon>
        <taxon>Alphaproteobacteria</taxon>
        <taxon>Rickettsiales</taxon>
        <taxon>Rickettsiaceae</taxon>
        <taxon>Rickettsieae</taxon>
        <taxon>Rickettsia</taxon>
        <taxon>spotted fever group</taxon>
    </lineage>
</organism>
<reference key="1">
    <citation type="submission" date="2007-09" db="EMBL/GenBank/DDBJ databases">
        <title>Complete genome sequence of Rickettsia rickettsii.</title>
        <authorList>
            <person name="Madan A."/>
            <person name="Fahey J."/>
            <person name="Helton E."/>
            <person name="Ketteman M."/>
            <person name="Madan A."/>
            <person name="Rodrigues S."/>
            <person name="Sanchez A."/>
            <person name="Dasch G."/>
            <person name="Eremeeva M."/>
        </authorList>
    </citation>
    <scope>NUCLEOTIDE SEQUENCE [LARGE SCALE GENOMIC DNA]</scope>
    <source>
        <strain>Sheila Smith</strain>
    </source>
</reference>
<feature type="chain" id="PRO_1000069797" description="7-cyano-7-deazaguanine synthase">
    <location>
        <begin position="1"/>
        <end position="228"/>
    </location>
</feature>
<feature type="binding site" evidence="1">
    <location>
        <begin position="9"/>
        <end position="19"/>
    </location>
    <ligand>
        <name>ATP</name>
        <dbReference type="ChEBI" id="CHEBI:30616"/>
    </ligand>
</feature>
<feature type="binding site" evidence="1">
    <location>
        <position position="193"/>
    </location>
    <ligand>
        <name>Zn(2+)</name>
        <dbReference type="ChEBI" id="CHEBI:29105"/>
    </ligand>
</feature>
<feature type="binding site" evidence="1">
    <location>
        <position position="203"/>
    </location>
    <ligand>
        <name>Zn(2+)</name>
        <dbReference type="ChEBI" id="CHEBI:29105"/>
    </ligand>
</feature>
<feature type="binding site" evidence="1">
    <location>
        <position position="206"/>
    </location>
    <ligand>
        <name>Zn(2+)</name>
        <dbReference type="ChEBI" id="CHEBI:29105"/>
    </ligand>
</feature>
<feature type="binding site" evidence="1">
    <location>
        <position position="209"/>
    </location>
    <ligand>
        <name>Zn(2+)</name>
        <dbReference type="ChEBI" id="CHEBI:29105"/>
    </ligand>
</feature>
<sequence>MKKKAVILLSGGPDSTTVLEIVSKTDYEIYALSFNYHRRNSLEVQKIQGLIKDYNVKQHRVINIDLQSFIGSALTDDNIDVPKFKNTDQLPSDIPVTYVPARNTIFLSYALGVAEVIGARDIFIGVHTNDYTNYPDCRPEYIKSFEAMANLATRVGVNGEKITIHAPLINMTKEQIIKKGLELGVDYSKTISCYDPTEDGLSCGQCLSCIVRLDAFKKNNVQDPIQYV</sequence>
<accession>A8GTC6</accession>
<name>QUEC_RICRS</name>
<gene>
    <name evidence="1" type="primary">queC</name>
    <name type="ordered locus">A1G_05935</name>
</gene>
<dbReference type="EC" id="6.3.4.20" evidence="1"/>
<dbReference type="EMBL" id="CP000848">
    <property type="protein sequence ID" value="ABV76651.1"/>
    <property type="molecule type" value="Genomic_DNA"/>
</dbReference>
<dbReference type="RefSeq" id="WP_012151205.1">
    <property type="nucleotide sequence ID" value="NZ_CP121767.1"/>
</dbReference>
<dbReference type="SMR" id="A8GTC6"/>
<dbReference type="GeneID" id="79937720"/>
<dbReference type="KEGG" id="rri:A1G_05935"/>
<dbReference type="HOGENOM" id="CLU_081854_1_1_5"/>
<dbReference type="UniPathway" id="UPA00391"/>
<dbReference type="Proteomes" id="UP000006832">
    <property type="component" value="Chromosome"/>
</dbReference>
<dbReference type="GO" id="GO:0005524">
    <property type="term" value="F:ATP binding"/>
    <property type="evidence" value="ECO:0007669"/>
    <property type="project" value="UniProtKB-UniRule"/>
</dbReference>
<dbReference type="GO" id="GO:0016879">
    <property type="term" value="F:ligase activity, forming carbon-nitrogen bonds"/>
    <property type="evidence" value="ECO:0007669"/>
    <property type="project" value="UniProtKB-UniRule"/>
</dbReference>
<dbReference type="GO" id="GO:0008270">
    <property type="term" value="F:zinc ion binding"/>
    <property type="evidence" value="ECO:0007669"/>
    <property type="project" value="UniProtKB-UniRule"/>
</dbReference>
<dbReference type="GO" id="GO:0008616">
    <property type="term" value="P:queuosine biosynthetic process"/>
    <property type="evidence" value="ECO:0007669"/>
    <property type="project" value="UniProtKB-UniRule"/>
</dbReference>
<dbReference type="CDD" id="cd01995">
    <property type="entry name" value="QueC-like"/>
    <property type="match status" value="1"/>
</dbReference>
<dbReference type="Gene3D" id="3.40.50.620">
    <property type="entry name" value="HUPs"/>
    <property type="match status" value="1"/>
</dbReference>
<dbReference type="HAMAP" id="MF_01633">
    <property type="entry name" value="QueC"/>
    <property type="match status" value="1"/>
</dbReference>
<dbReference type="InterPro" id="IPR018317">
    <property type="entry name" value="QueC"/>
</dbReference>
<dbReference type="InterPro" id="IPR014729">
    <property type="entry name" value="Rossmann-like_a/b/a_fold"/>
</dbReference>
<dbReference type="NCBIfam" id="TIGR00364">
    <property type="entry name" value="7-cyano-7-deazaguanine synthase QueC"/>
    <property type="match status" value="1"/>
</dbReference>
<dbReference type="PANTHER" id="PTHR42914">
    <property type="entry name" value="7-CYANO-7-DEAZAGUANINE SYNTHASE"/>
    <property type="match status" value="1"/>
</dbReference>
<dbReference type="PANTHER" id="PTHR42914:SF1">
    <property type="entry name" value="7-CYANO-7-DEAZAGUANINE SYNTHASE"/>
    <property type="match status" value="1"/>
</dbReference>
<dbReference type="Pfam" id="PF06508">
    <property type="entry name" value="QueC"/>
    <property type="match status" value="1"/>
</dbReference>
<dbReference type="PIRSF" id="PIRSF006293">
    <property type="entry name" value="ExsB"/>
    <property type="match status" value="1"/>
</dbReference>
<dbReference type="SUPFAM" id="SSF52402">
    <property type="entry name" value="Adenine nucleotide alpha hydrolases-like"/>
    <property type="match status" value="1"/>
</dbReference>
<protein>
    <recommendedName>
        <fullName evidence="1">7-cyano-7-deazaguanine synthase</fullName>
        <ecNumber evidence="1">6.3.4.20</ecNumber>
    </recommendedName>
    <alternativeName>
        <fullName evidence="1">7-cyano-7-carbaguanine synthase</fullName>
    </alternativeName>
    <alternativeName>
        <fullName evidence="1">PreQ(0) synthase</fullName>
    </alternativeName>
    <alternativeName>
        <fullName evidence="1">Queuosine biosynthesis protein QueC</fullName>
    </alternativeName>
</protein>
<comment type="function">
    <text evidence="1">Catalyzes the ATP-dependent conversion of 7-carboxy-7-deazaguanine (CDG) to 7-cyano-7-deazaguanine (preQ(0)).</text>
</comment>
<comment type="catalytic activity">
    <reaction evidence="1">
        <text>7-carboxy-7-deazaguanine + NH4(+) + ATP = 7-cyano-7-deazaguanine + ADP + phosphate + H2O + H(+)</text>
        <dbReference type="Rhea" id="RHEA:27982"/>
        <dbReference type="ChEBI" id="CHEBI:15377"/>
        <dbReference type="ChEBI" id="CHEBI:15378"/>
        <dbReference type="ChEBI" id="CHEBI:28938"/>
        <dbReference type="ChEBI" id="CHEBI:30616"/>
        <dbReference type="ChEBI" id="CHEBI:43474"/>
        <dbReference type="ChEBI" id="CHEBI:45075"/>
        <dbReference type="ChEBI" id="CHEBI:61036"/>
        <dbReference type="ChEBI" id="CHEBI:456216"/>
        <dbReference type="EC" id="6.3.4.20"/>
    </reaction>
</comment>
<comment type="cofactor">
    <cofactor evidence="1">
        <name>Zn(2+)</name>
        <dbReference type="ChEBI" id="CHEBI:29105"/>
    </cofactor>
    <text evidence="1">Binds 1 zinc ion per subunit.</text>
</comment>
<comment type="pathway">
    <text evidence="1">Purine metabolism; 7-cyano-7-deazaguanine biosynthesis.</text>
</comment>
<comment type="similarity">
    <text evidence="1">Belongs to the QueC family.</text>
</comment>
<proteinExistence type="inferred from homology"/>
<evidence type="ECO:0000255" key="1">
    <source>
        <dbReference type="HAMAP-Rule" id="MF_01633"/>
    </source>
</evidence>
<keyword id="KW-0067">ATP-binding</keyword>
<keyword id="KW-0436">Ligase</keyword>
<keyword id="KW-0479">Metal-binding</keyword>
<keyword id="KW-0547">Nucleotide-binding</keyword>
<keyword id="KW-0671">Queuosine biosynthesis</keyword>
<keyword id="KW-0862">Zinc</keyword>